<organism>
    <name type="scientific">Beutenbergia cavernae (strain ATCC BAA-8 / DSM 12333 / CCUG 43141 / JCM 11478 / NBRC 16432 / NCIMB 13614 / HKI 0122)</name>
    <dbReference type="NCBI Taxonomy" id="471853"/>
    <lineage>
        <taxon>Bacteria</taxon>
        <taxon>Bacillati</taxon>
        <taxon>Actinomycetota</taxon>
        <taxon>Actinomycetes</taxon>
        <taxon>Micrococcales</taxon>
        <taxon>Beutenbergiaceae</taxon>
        <taxon>Beutenbergia</taxon>
    </lineage>
</organism>
<reference key="1">
    <citation type="journal article" date="2009" name="Stand. Genomic Sci.">
        <title>Complete genome sequence of Beutenbergia cavernae type strain (HKI 0122).</title>
        <authorList>
            <person name="Land M."/>
            <person name="Pukall R."/>
            <person name="Abt B."/>
            <person name="Goker M."/>
            <person name="Rohde M."/>
            <person name="Glavina Del Rio T."/>
            <person name="Tice H."/>
            <person name="Copeland A."/>
            <person name="Cheng J.F."/>
            <person name="Lucas S."/>
            <person name="Chen F."/>
            <person name="Nolan M."/>
            <person name="Bruce D."/>
            <person name="Goodwin L."/>
            <person name="Pitluck S."/>
            <person name="Ivanova N."/>
            <person name="Mavromatis K."/>
            <person name="Ovchinnikova G."/>
            <person name="Pati A."/>
            <person name="Chen A."/>
            <person name="Palaniappan K."/>
            <person name="Hauser L."/>
            <person name="Chang Y.J."/>
            <person name="Jefferies C.C."/>
            <person name="Saunders E."/>
            <person name="Brettin T."/>
            <person name="Detter J.C."/>
            <person name="Han C."/>
            <person name="Chain P."/>
            <person name="Bristow J."/>
            <person name="Eisen J.A."/>
            <person name="Markowitz V."/>
            <person name="Hugenholtz P."/>
            <person name="Kyrpides N.C."/>
            <person name="Klenk H.P."/>
            <person name="Lapidus A."/>
        </authorList>
    </citation>
    <scope>NUCLEOTIDE SEQUENCE [LARGE SCALE GENOMIC DNA]</scope>
    <source>
        <strain>ATCC BAA-8 / DSM 12333 / CCUG 43141 / JCM 11478 / NBRC 16432 / NCIMB 13614 / HKI 0122</strain>
    </source>
</reference>
<dbReference type="EMBL" id="CP001618">
    <property type="protein sequence ID" value="ACQ80787.1"/>
    <property type="molecule type" value="Genomic_DNA"/>
</dbReference>
<dbReference type="RefSeq" id="WP_015883027.1">
    <property type="nucleotide sequence ID" value="NC_012669.1"/>
</dbReference>
<dbReference type="SMR" id="C5BWX1"/>
<dbReference type="STRING" id="471853.Bcav_2540"/>
<dbReference type="KEGG" id="bcv:Bcav_2540"/>
<dbReference type="eggNOG" id="COG0228">
    <property type="taxonomic scope" value="Bacteria"/>
</dbReference>
<dbReference type="HOGENOM" id="CLU_100590_1_0_11"/>
<dbReference type="OrthoDB" id="9807878at2"/>
<dbReference type="Proteomes" id="UP000007962">
    <property type="component" value="Chromosome"/>
</dbReference>
<dbReference type="GO" id="GO:0005737">
    <property type="term" value="C:cytoplasm"/>
    <property type="evidence" value="ECO:0007669"/>
    <property type="project" value="UniProtKB-ARBA"/>
</dbReference>
<dbReference type="GO" id="GO:0015935">
    <property type="term" value="C:small ribosomal subunit"/>
    <property type="evidence" value="ECO:0007669"/>
    <property type="project" value="TreeGrafter"/>
</dbReference>
<dbReference type="GO" id="GO:0003735">
    <property type="term" value="F:structural constituent of ribosome"/>
    <property type="evidence" value="ECO:0007669"/>
    <property type="project" value="InterPro"/>
</dbReference>
<dbReference type="GO" id="GO:0006412">
    <property type="term" value="P:translation"/>
    <property type="evidence" value="ECO:0007669"/>
    <property type="project" value="UniProtKB-UniRule"/>
</dbReference>
<dbReference type="Gene3D" id="3.30.1320.10">
    <property type="match status" value="1"/>
</dbReference>
<dbReference type="HAMAP" id="MF_00385">
    <property type="entry name" value="Ribosomal_bS16"/>
    <property type="match status" value="1"/>
</dbReference>
<dbReference type="InterPro" id="IPR000307">
    <property type="entry name" value="Ribosomal_bS16"/>
</dbReference>
<dbReference type="InterPro" id="IPR020592">
    <property type="entry name" value="Ribosomal_bS16_CS"/>
</dbReference>
<dbReference type="InterPro" id="IPR023803">
    <property type="entry name" value="Ribosomal_bS16_dom_sf"/>
</dbReference>
<dbReference type="NCBIfam" id="NF011093">
    <property type="entry name" value="PRK14520.1"/>
    <property type="match status" value="1"/>
</dbReference>
<dbReference type="NCBIfam" id="TIGR00002">
    <property type="entry name" value="S16"/>
    <property type="match status" value="1"/>
</dbReference>
<dbReference type="PANTHER" id="PTHR12919">
    <property type="entry name" value="30S RIBOSOMAL PROTEIN S16"/>
    <property type="match status" value="1"/>
</dbReference>
<dbReference type="PANTHER" id="PTHR12919:SF20">
    <property type="entry name" value="SMALL RIBOSOMAL SUBUNIT PROTEIN BS16M"/>
    <property type="match status" value="1"/>
</dbReference>
<dbReference type="Pfam" id="PF00886">
    <property type="entry name" value="Ribosomal_S16"/>
    <property type="match status" value="1"/>
</dbReference>
<dbReference type="SUPFAM" id="SSF54565">
    <property type="entry name" value="Ribosomal protein S16"/>
    <property type="match status" value="1"/>
</dbReference>
<dbReference type="PROSITE" id="PS00732">
    <property type="entry name" value="RIBOSOMAL_S16"/>
    <property type="match status" value="1"/>
</dbReference>
<feature type="chain" id="PRO_1000205749" description="Small ribosomal subunit protein bS16">
    <location>
        <begin position="1"/>
        <end position="152"/>
    </location>
</feature>
<feature type="region of interest" description="Disordered" evidence="2">
    <location>
        <begin position="118"/>
        <end position="152"/>
    </location>
</feature>
<feature type="compositionally biased region" description="Basic and acidic residues" evidence="2">
    <location>
        <begin position="118"/>
        <end position="130"/>
    </location>
</feature>
<feature type="compositionally biased region" description="Low complexity" evidence="2">
    <location>
        <begin position="131"/>
        <end position="144"/>
    </location>
</feature>
<name>RS16_BEUC1</name>
<comment type="similarity">
    <text evidence="1">Belongs to the bacterial ribosomal protein bS16 family.</text>
</comment>
<accession>C5BWX1</accession>
<gene>
    <name evidence="1" type="primary">rpsP</name>
    <name type="ordered locus">Bcav_2540</name>
</gene>
<keyword id="KW-1185">Reference proteome</keyword>
<keyword id="KW-0687">Ribonucleoprotein</keyword>
<keyword id="KW-0689">Ribosomal protein</keyword>
<sequence>MAVKIRLKRLGKIRAPYYRVVVADSRTRRDGRVIEEIGKYHPTEDPSVIDIASERAQYWLGVGAQPTEQVLALLKVTGDWQKFKGLPGAEGTLRVKDGAAAASPDAAKEKVAAIEAEAEKHKAKASEKKAAAAASADEAGSAAADDAEGSES</sequence>
<evidence type="ECO:0000255" key="1">
    <source>
        <dbReference type="HAMAP-Rule" id="MF_00385"/>
    </source>
</evidence>
<evidence type="ECO:0000256" key="2">
    <source>
        <dbReference type="SAM" id="MobiDB-lite"/>
    </source>
</evidence>
<evidence type="ECO:0000305" key="3"/>
<proteinExistence type="inferred from homology"/>
<protein>
    <recommendedName>
        <fullName evidence="1">Small ribosomal subunit protein bS16</fullName>
    </recommendedName>
    <alternativeName>
        <fullName evidence="3">30S ribosomal protein S16</fullName>
    </alternativeName>
</protein>